<reference key="1">
    <citation type="journal article" date="2001" name="Science">
        <title>The genome of the natural genetic engineer Agrobacterium tumefaciens C58.</title>
        <authorList>
            <person name="Wood D.W."/>
            <person name="Setubal J.C."/>
            <person name="Kaul R."/>
            <person name="Monks D.E."/>
            <person name="Kitajima J.P."/>
            <person name="Okura V.K."/>
            <person name="Zhou Y."/>
            <person name="Chen L."/>
            <person name="Wood G.E."/>
            <person name="Almeida N.F. Jr."/>
            <person name="Woo L."/>
            <person name="Chen Y."/>
            <person name="Paulsen I.T."/>
            <person name="Eisen J.A."/>
            <person name="Karp P.D."/>
            <person name="Bovee D. Sr."/>
            <person name="Chapman P."/>
            <person name="Clendenning J."/>
            <person name="Deatherage G."/>
            <person name="Gillet W."/>
            <person name="Grant C."/>
            <person name="Kutyavin T."/>
            <person name="Levy R."/>
            <person name="Li M.-J."/>
            <person name="McClelland E."/>
            <person name="Palmieri A."/>
            <person name="Raymond C."/>
            <person name="Rouse G."/>
            <person name="Saenphimmachak C."/>
            <person name="Wu Z."/>
            <person name="Romero P."/>
            <person name="Gordon D."/>
            <person name="Zhang S."/>
            <person name="Yoo H."/>
            <person name="Tao Y."/>
            <person name="Biddle P."/>
            <person name="Jung M."/>
            <person name="Krespan W."/>
            <person name="Perry M."/>
            <person name="Gordon-Kamm B."/>
            <person name="Liao L."/>
            <person name="Kim S."/>
            <person name="Hendrick C."/>
            <person name="Zhao Z.-Y."/>
            <person name="Dolan M."/>
            <person name="Chumley F."/>
            <person name="Tingey S.V."/>
            <person name="Tomb J.-F."/>
            <person name="Gordon M.P."/>
            <person name="Olson M.V."/>
            <person name="Nester E.W."/>
        </authorList>
    </citation>
    <scope>NUCLEOTIDE SEQUENCE [LARGE SCALE GENOMIC DNA]</scope>
    <source>
        <strain>C58 / ATCC 33970</strain>
    </source>
</reference>
<reference key="2">
    <citation type="journal article" date="2001" name="Science">
        <title>Genome sequence of the plant pathogen and biotechnology agent Agrobacterium tumefaciens C58.</title>
        <authorList>
            <person name="Goodner B."/>
            <person name="Hinkle G."/>
            <person name="Gattung S."/>
            <person name="Miller N."/>
            <person name="Blanchard M."/>
            <person name="Qurollo B."/>
            <person name="Goldman B.S."/>
            <person name="Cao Y."/>
            <person name="Askenazi M."/>
            <person name="Halling C."/>
            <person name="Mullin L."/>
            <person name="Houmiel K."/>
            <person name="Gordon J."/>
            <person name="Vaudin M."/>
            <person name="Iartchouk O."/>
            <person name="Epp A."/>
            <person name="Liu F."/>
            <person name="Wollam C."/>
            <person name="Allinger M."/>
            <person name="Doughty D."/>
            <person name="Scott C."/>
            <person name="Lappas C."/>
            <person name="Markelz B."/>
            <person name="Flanagan C."/>
            <person name="Crowell C."/>
            <person name="Gurson J."/>
            <person name="Lomo C."/>
            <person name="Sear C."/>
            <person name="Strub G."/>
            <person name="Cielo C."/>
            <person name="Slater S."/>
        </authorList>
    </citation>
    <scope>NUCLEOTIDE SEQUENCE [LARGE SCALE GENOMIC DNA]</scope>
    <source>
        <strain>C58 / ATCC 33970</strain>
    </source>
</reference>
<comment type="function">
    <text evidence="1">Small subunit of the glutamine-dependent carbamoyl phosphate synthetase (CPSase). CPSase catalyzes the formation of carbamoyl phosphate from the ammonia moiety of glutamine, carbonate, and phosphate donated by ATP, constituting the first step of 2 biosynthetic pathways, one leading to arginine and/or urea and the other to pyrimidine nucleotides. The small subunit (glutamine amidotransferase) binds and cleaves glutamine to supply the large subunit with the substrate ammonia.</text>
</comment>
<comment type="catalytic activity">
    <reaction evidence="1">
        <text>hydrogencarbonate + L-glutamine + 2 ATP + H2O = carbamoyl phosphate + L-glutamate + 2 ADP + phosphate + 2 H(+)</text>
        <dbReference type="Rhea" id="RHEA:18633"/>
        <dbReference type="ChEBI" id="CHEBI:15377"/>
        <dbReference type="ChEBI" id="CHEBI:15378"/>
        <dbReference type="ChEBI" id="CHEBI:17544"/>
        <dbReference type="ChEBI" id="CHEBI:29985"/>
        <dbReference type="ChEBI" id="CHEBI:30616"/>
        <dbReference type="ChEBI" id="CHEBI:43474"/>
        <dbReference type="ChEBI" id="CHEBI:58228"/>
        <dbReference type="ChEBI" id="CHEBI:58359"/>
        <dbReference type="ChEBI" id="CHEBI:456216"/>
        <dbReference type="EC" id="6.3.5.5"/>
    </reaction>
</comment>
<comment type="catalytic activity">
    <molecule>Carbamoyl phosphate synthase small chain</molecule>
    <reaction evidence="1">
        <text>L-glutamine + H2O = L-glutamate + NH4(+)</text>
        <dbReference type="Rhea" id="RHEA:15889"/>
        <dbReference type="ChEBI" id="CHEBI:15377"/>
        <dbReference type="ChEBI" id="CHEBI:28938"/>
        <dbReference type="ChEBI" id="CHEBI:29985"/>
        <dbReference type="ChEBI" id="CHEBI:58359"/>
    </reaction>
</comment>
<comment type="pathway">
    <text evidence="1">Amino-acid biosynthesis; L-arginine biosynthesis; carbamoyl phosphate from bicarbonate: step 1/1.</text>
</comment>
<comment type="pathway">
    <text evidence="1">Pyrimidine metabolism; UMP biosynthesis via de novo pathway; (S)-dihydroorotate from bicarbonate: step 1/3.</text>
</comment>
<comment type="subunit">
    <text evidence="1">Composed of two chains; the small (or glutamine) chain promotes the hydrolysis of glutamine to ammonia, which is used by the large (or ammonia) chain to synthesize carbamoyl phosphate. Tetramer of heterodimers (alpha,beta)4.</text>
</comment>
<comment type="similarity">
    <text evidence="1">Belongs to the CarA family.</text>
</comment>
<protein>
    <recommendedName>
        <fullName evidence="1">Carbamoyl phosphate synthase small chain</fullName>
        <ecNumber evidence="1">6.3.5.5</ecNumber>
    </recommendedName>
    <alternativeName>
        <fullName evidence="1">Carbamoyl phosphate synthetase glutamine chain</fullName>
    </alternativeName>
</protein>
<accession>Q8UDF7</accession>
<sequence>MTETAPWTTRKPTAMLVLADGTVIEGTGIGATGKVQAEVCFNTALTGYEEILTDPSYLGQIVTFTFPHIGNVGTNEEDIEDLTPAARRGAVGVIFKADITDPSNFRAVKHLDAWLKARGVIGLCGIDTRALTAWIRENGAPNAVIAHDPNGVFDIEALKAEAKAWSGLVGLDLAIEATSGQSSTWTETPWVWNKGYGTLGEADAKYHVVCVDFGVKRNILRLFAGLDCKVTVVPAQTSAEDILALKPDGVFLSNGPGDPAATGEYAVPVIQNLIKSELPIFGICLGHQMLGLAVGAKTEKMHQGHHGANHPVKDFTTGKVEIVSMNHGFAVDTKSLPEGVEETHTSLFDGTNCGLRIVGKPVFSVQHHPEASPGPQDSHYLFRRFVNLLRENKGEAALAER</sequence>
<name>CARA_AGRFC</name>
<organism>
    <name type="scientific">Agrobacterium fabrum (strain C58 / ATCC 33970)</name>
    <name type="common">Agrobacterium tumefaciens (strain C58)</name>
    <dbReference type="NCBI Taxonomy" id="176299"/>
    <lineage>
        <taxon>Bacteria</taxon>
        <taxon>Pseudomonadati</taxon>
        <taxon>Pseudomonadota</taxon>
        <taxon>Alphaproteobacteria</taxon>
        <taxon>Hyphomicrobiales</taxon>
        <taxon>Rhizobiaceae</taxon>
        <taxon>Rhizobium/Agrobacterium group</taxon>
        <taxon>Agrobacterium</taxon>
        <taxon>Agrobacterium tumefaciens complex</taxon>
    </lineage>
</organism>
<evidence type="ECO:0000255" key="1">
    <source>
        <dbReference type="HAMAP-Rule" id="MF_01209"/>
    </source>
</evidence>
<keyword id="KW-0028">Amino-acid biosynthesis</keyword>
<keyword id="KW-0055">Arginine biosynthesis</keyword>
<keyword id="KW-0067">ATP-binding</keyword>
<keyword id="KW-0315">Glutamine amidotransferase</keyword>
<keyword id="KW-0436">Ligase</keyword>
<keyword id="KW-0547">Nucleotide-binding</keyword>
<keyword id="KW-0665">Pyrimidine biosynthesis</keyword>
<keyword id="KW-1185">Reference proteome</keyword>
<feature type="chain" id="PRO_0000112243" description="Carbamoyl phosphate synthase small chain">
    <location>
        <begin position="1"/>
        <end position="401"/>
    </location>
</feature>
<feature type="domain" description="Glutamine amidotransferase type-1" evidence="1">
    <location>
        <begin position="207"/>
        <end position="395"/>
    </location>
</feature>
<feature type="region of interest" description="CPSase" evidence="1">
    <location>
        <begin position="1"/>
        <end position="203"/>
    </location>
</feature>
<feature type="active site" description="Nucleophile" evidence="1">
    <location>
        <position position="284"/>
    </location>
</feature>
<feature type="active site" evidence="1">
    <location>
        <position position="368"/>
    </location>
</feature>
<feature type="active site" evidence="1">
    <location>
        <position position="370"/>
    </location>
</feature>
<feature type="binding site" evidence="1">
    <location>
        <position position="56"/>
    </location>
    <ligand>
        <name>L-glutamine</name>
        <dbReference type="ChEBI" id="CHEBI:58359"/>
    </ligand>
</feature>
<feature type="binding site" evidence="1">
    <location>
        <position position="255"/>
    </location>
    <ligand>
        <name>L-glutamine</name>
        <dbReference type="ChEBI" id="CHEBI:58359"/>
    </ligand>
</feature>
<feature type="binding site" evidence="1">
    <location>
        <position position="257"/>
    </location>
    <ligand>
        <name>L-glutamine</name>
        <dbReference type="ChEBI" id="CHEBI:58359"/>
    </ligand>
</feature>
<feature type="binding site" evidence="1">
    <location>
        <position position="285"/>
    </location>
    <ligand>
        <name>L-glutamine</name>
        <dbReference type="ChEBI" id="CHEBI:58359"/>
    </ligand>
</feature>
<feature type="binding site" evidence="1">
    <location>
        <position position="288"/>
    </location>
    <ligand>
        <name>L-glutamine</name>
        <dbReference type="ChEBI" id="CHEBI:58359"/>
    </ligand>
</feature>
<feature type="binding site" evidence="1">
    <location>
        <position position="326"/>
    </location>
    <ligand>
        <name>L-glutamine</name>
        <dbReference type="ChEBI" id="CHEBI:58359"/>
    </ligand>
</feature>
<feature type="binding site" evidence="1">
    <location>
        <position position="328"/>
    </location>
    <ligand>
        <name>L-glutamine</name>
        <dbReference type="ChEBI" id="CHEBI:58359"/>
    </ligand>
</feature>
<feature type="binding site" evidence="1">
    <location>
        <position position="329"/>
    </location>
    <ligand>
        <name>L-glutamine</name>
        <dbReference type="ChEBI" id="CHEBI:58359"/>
    </ligand>
</feature>
<dbReference type="EC" id="6.3.5.5" evidence="1"/>
<dbReference type="EMBL" id="AE007869">
    <property type="protein sequence ID" value="AAK87915.2"/>
    <property type="molecule type" value="Genomic_DNA"/>
</dbReference>
<dbReference type="PIR" id="AI2842">
    <property type="entry name" value="AI2842"/>
</dbReference>
<dbReference type="PIR" id="B97620">
    <property type="entry name" value="B97620"/>
</dbReference>
<dbReference type="RefSeq" id="NP_355130.2">
    <property type="nucleotide sequence ID" value="NC_003062.2"/>
</dbReference>
<dbReference type="RefSeq" id="WP_010972111.1">
    <property type="nucleotide sequence ID" value="NC_003062.2"/>
</dbReference>
<dbReference type="SMR" id="Q8UDF7"/>
<dbReference type="STRING" id="176299.Atu2170"/>
<dbReference type="MEROPS" id="C26.954"/>
<dbReference type="EnsemblBacteria" id="AAK87915">
    <property type="protein sequence ID" value="AAK87915"/>
    <property type="gene ID" value="Atu2170"/>
</dbReference>
<dbReference type="GeneID" id="1134208"/>
<dbReference type="KEGG" id="atu:Atu2170"/>
<dbReference type="PATRIC" id="fig|176299.10.peg.2180"/>
<dbReference type="eggNOG" id="COG0505">
    <property type="taxonomic scope" value="Bacteria"/>
</dbReference>
<dbReference type="HOGENOM" id="CLU_035901_2_2_5"/>
<dbReference type="OrthoDB" id="9804328at2"/>
<dbReference type="PhylomeDB" id="Q8UDF7"/>
<dbReference type="BioCyc" id="AGRO:ATU2170-MONOMER"/>
<dbReference type="UniPathway" id="UPA00068">
    <property type="reaction ID" value="UER00171"/>
</dbReference>
<dbReference type="UniPathway" id="UPA00070">
    <property type="reaction ID" value="UER00115"/>
</dbReference>
<dbReference type="Proteomes" id="UP000000813">
    <property type="component" value="Chromosome circular"/>
</dbReference>
<dbReference type="GO" id="GO:0005524">
    <property type="term" value="F:ATP binding"/>
    <property type="evidence" value="ECO:0007669"/>
    <property type="project" value="UniProtKB-UniRule"/>
</dbReference>
<dbReference type="GO" id="GO:0004088">
    <property type="term" value="F:carbamoyl-phosphate synthase (glutamine-hydrolyzing) activity"/>
    <property type="evidence" value="ECO:0007669"/>
    <property type="project" value="UniProtKB-UniRule"/>
</dbReference>
<dbReference type="GO" id="GO:0004359">
    <property type="term" value="F:glutaminase activity"/>
    <property type="evidence" value="ECO:0007669"/>
    <property type="project" value="RHEA"/>
</dbReference>
<dbReference type="GO" id="GO:0006207">
    <property type="term" value="P:'de novo' pyrimidine nucleobase biosynthetic process"/>
    <property type="evidence" value="ECO:0007669"/>
    <property type="project" value="InterPro"/>
</dbReference>
<dbReference type="GO" id="GO:0044205">
    <property type="term" value="P:'de novo' UMP biosynthetic process"/>
    <property type="evidence" value="ECO:0007669"/>
    <property type="project" value="UniProtKB-UniRule"/>
</dbReference>
<dbReference type="GO" id="GO:0006541">
    <property type="term" value="P:glutamine metabolic process"/>
    <property type="evidence" value="ECO:0007669"/>
    <property type="project" value="InterPro"/>
</dbReference>
<dbReference type="GO" id="GO:0006526">
    <property type="term" value="P:L-arginine biosynthetic process"/>
    <property type="evidence" value="ECO:0007669"/>
    <property type="project" value="UniProtKB-UniRule"/>
</dbReference>
<dbReference type="CDD" id="cd01744">
    <property type="entry name" value="GATase1_CPSase"/>
    <property type="match status" value="1"/>
</dbReference>
<dbReference type="Gene3D" id="3.40.50.880">
    <property type="match status" value="1"/>
</dbReference>
<dbReference type="Gene3D" id="3.50.30.20">
    <property type="entry name" value="Carbamoyl-phosphate synthase small subunit, N-terminal domain"/>
    <property type="match status" value="1"/>
</dbReference>
<dbReference type="HAMAP" id="MF_01209">
    <property type="entry name" value="CPSase_S_chain"/>
    <property type="match status" value="1"/>
</dbReference>
<dbReference type="InterPro" id="IPR050472">
    <property type="entry name" value="Anth_synth/Amidotransfase"/>
</dbReference>
<dbReference type="InterPro" id="IPR006274">
    <property type="entry name" value="CarbamoylP_synth_ssu"/>
</dbReference>
<dbReference type="InterPro" id="IPR002474">
    <property type="entry name" value="CarbamoylP_synth_ssu_N"/>
</dbReference>
<dbReference type="InterPro" id="IPR036480">
    <property type="entry name" value="CarbP_synth_ssu_N_sf"/>
</dbReference>
<dbReference type="InterPro" id="IPR029062">
    <property type="entry name" value="Class_I_gatase-like"/>
</dbReference>
<dbReference type="InterPro" id="IPR035686">
    <property type="entry name" value="CPSase_GATase1"/>
</dbReference>
<dbReference type="InterPro" id="IPR017926">
    <property type="entry name" value="GATASE"/>
</dbReference>
<dbReference type="NCBIfam" id="TIGR01368">
    <property type="entry name" value="CPSaseIIsmall"/>
    <property type="match status" value="1"/>
</dbReference>
<dbReference type="NCBIfam" id="NF009475">
    <property type="entry name" value="PRK12838.1"/>
    <property type="match status" value="1"/>
</dbReference>
<dbReference type="PANTHER" id="PTHR43418:SF7">
    <property type="entry name" value="CARBAMOYL-PHOSPHATE SYNTHASE SMALL CHAIN"/>
    <property type="match status" value="1"/>
</dbReference>
<dbReference type="PANTHER" id="PTHR43418">
    <property type="entry name" value="MULTIFUNCTIONAL TRYPTOPHAN BIOSYNTHESIS PROTEIN-RELATED"/>
    <property type="match status" value="1"/>
</dbReference>
<dbReference type="Pfam" id="PF00988">
    <property type="entry name" value="CPSase_sm_chain"/>
    <property type="match status" value="1"/>
</dbReference>
<dbReference type="Pfam" id="PF00117">
    <property type="entry name" value="GATase"/>
    <property type="match status" value="1"/>
</dbReference>
<dbReference type="PRINTS" id="PR00097">
    <property type="entry name" value="ANTSNTHASEII"/>
</dbReference>
<dbReference type="PRINTS" id="PR00099">
    <property type="entry name" value="CPSGATASE"/>
</dbReference>
<dbReference type="PRINTS" id="PR00096">
    <property type="entry name" value="GATASE"/>
</dbReference>
<dbReference type="SMART" id="SM01097">
    <property type="entry name" value="CPSase_sm_chain"/>
    <property type="match status" value="1"/>
</dbReference>
<dbReference type="SUPFAM" id="SSF52021">
    <property type="entry name" value="Carbamoyl phosphate synthetase, small subunit N-terminal domain"/>
    <property type="match status" value="1"/>
</dbReference>
<dbReference type="SUPFAM" id="SSF52317">
    <property type="entry name" value="Class I glutamine amidotransferase-like"/>
    <property type="match status" value="1"/>
</dbReference>
<dbReference type="PROSITE" id="PS51273">
    <property type="entry name" value="GATASE_TYPE_1"/>
    <property type="match status" value="1"/>
</dbReference>
<proteinExistence type="inferred from homology"/>
<gene>
    <name evidence="1" type="primary">carA</name>
    <name type="ordered locus">Atu2170</name>
    <name type="ORF">AGR_C_3938</name>
</gene>